<protein>
    <recommendedName>
        <fullName evidence="1">S-adenosylmethionine synthase</fullName>
        <shortName evidence="1">AdoMet synthase</shortName>
        <ecNumber evidence="1">2.5.1.6</ecNumber>
    </recommendedName>
    <alternativeName>
        <fullName evidence="1">MAT</fullName>
    </alternativeName>
    <alternativeName>
        <fullName evidence="1">Methionine adenosyltransferase</fullName>
    </alternativeName>
</protein>
<comment type="function">
    <text evidence="1">Catalyzes the formation of S-adenosylmethionine (AdoMet) from methionine and ATP. The overall synthetic reaction is composed of two sequential steps, AdoMet formation and the subsequent tripolyphosphate hydrolysis which occurs prior to release of AdoMet from the enzyme.</text>
</comment>
<comment type="catalytic activity">
    <reaction evidence="1">
        <text>L-methionine + ATP + H2O = S-adenosyl-L-methionine + phosphate + diphosphate</text>
        <dbReference type="Rhea" id="RHEA:21080"/>
        <dbReference type="ChEBI" id="CHEBI:15377"/>
        <dbReference type="ChEBI" id="CHEBI:30616"/>
        <dbReference type="ChEBI" id="CHEBI:33019"/>
        <dbReference type="ChEBI" id="CHEBI:43474"/>
        <dbReference type="ChEBI" id="CHEBI:57844"/>
        <dbReference type="ChEBI" id="CHEBI:59789"/>
        <dbReference type="EC" id="2.5.1.6"/>
    </reaction>
</comment>
<comment type="cofactor">
    <cofactor evidence="1">
        <name>Mg(2+)</name>
        <dbReference type="ChEBI" id="CHEBI:18420"/>
    </cofactor>
    <text evidence="1">Binds 2 divalent ions per subunit.</text>
</comment>
<comment type="cofactor">
    <cofactor evidence="1">
        <name>K(+)</name>
        <dbReference type="ChEBI" id="CHEBI:29103"/>
    </cofactor>
    <text evidence="1">Binds 1 potassium ion per subunit.</text>
</comment>
<comment type="pathway">
    <text evidence="1">Amino-acid biosynthesis; S-adenosyl-L-methionine biosynthesis; S-adenosyl-L-methionine from L-methionine: step 1/1.</text>
</comment>
<comment type="subunit">
    <text evidence="1">Homotetramer; dimer of dimers.</text>
</comment>
<comment type="subcellular location">
    <subcellularLocation>
        <location evidence="1">Cytoplasm</location>
    </subcellularLocation>
</comment>
<comment type="similarity">
    <text evidence="1">Belongs to the AdoMet synthase family.</text>
</comment>
<keyword id="KW-0067">ATP-binding</keyword>
<keyword id="KW-0963">Cytoplasm</keyword>
<keyword id="KW-0460">Magnesium</keyword>
<keyword id="KW-0479">Metal-binding</keyword>
<keyword id="KW-0547">Nucleotide-binding</keyword>
<keyword id="KW-0554">One-carbon metabolism</keyword>
<keyword id="KW-0630">Potassium</keyword>
<keyword id="KW-0808">Transferase</keyword>
<proteinExistence type="inferred from homology"/>
<reference key="1">
    <citation type="submission" date="2008-02" db="EMBL/GenBank/DDBJ databases">
        <title>Complete sequence of chromosome 1 of Burkholderia cenocepacia MC0-3.</title>
        <authorList>
            <person name="Copeland A."/>
            <person name="Lucas S."/>
            <person name="Lapidus A."/>
            <person name="Barry K."/>
            <person name="Bruce D."/>
            <person name="Goodwin L."/>
            <person name="Glavina del Rio T."/>
            <person name="Dalin E."/>
            <person name="Tice H."/>
            <person name="Pitluck S."/>
            <person name="Chain P."/>
            <person name="Malfatti S."/>
            <person name="Shin M."/>
            <person name="Vergez L."/>
            <person name="Schmutz J."/>
            <person name="Larimer F."/>
            <person name="Land M."/>
            <person name="Hauser L."/>
            <person name="Kyrpides N."/>
            <person name="Mikhailova N."/>
            <person name="Tiedje J."/>
            <person name="Richardson P."/>
        </authorList>
    </citation>
    <scope>NUCLEOTIDE SEQUENCE [LARGE SCALE GENOMIC DNA]</scope>
    <source>
        <strain>MC0-3</strain>
    </source>
</reference>
<name>METK_BURO0</name>
<accession>B1K0F2</accession>
<dbReference type="EC" id="2.5.1.6" evidence="1"/>
<dbReference type="EMBL" id="CP000958">
    <property type="protein sequence ID" value="ACA92257.1"/>
    <property type="molecule type" value="Genomic_DNA"/>
</dbReference>
<dbReference type="RefSeq" id="WP_011546455.1">
    <property type="nucleotide sequence ID" value="NC_010508.1"/>
</dbReference>
<dbReference type="SMR" id="B1K0F2"/>
<dbReference type="GeneID" id="83049879"/>
<dbReference type="KEGG" id="bcm:Bcenmc03_3099"/>
<dbReference type="HOGENOM" id="CLU_041802_1_1_4"/>
<dbReference type="UniPathway" id="UPA00315">
    <property type="reaction ID" value="UER00080"/>
</dbReference>
<dbReference type="Proteomes" id="UP000002169">
    <property type="component" value="Chromosome 1"/>
</dbReference>
<dbReference type="GO" id="GO:0005737">
    <property type="term" value="C:cytoplasm"/>
    <property type="evidence" value="ECO:0007669"/>
    <property type="project" value="UniProtKB-SubCell"/>
</dbReference>
<dbReference type="GO" id="GO:0005524">
    <property type="term" value="F:ATP binding"/>
    <property type="evidence" value="ECO:0007669"/>
    <property type="project" value="UniProtKB-UniRule"/>
</dbReference>
<dbReference type="GO" id="GO:0000287">
    <property type="term" value="F:magnesium ion binding"/>
    <property type="evidence" value="ECO:0007669"/>
    <property type="project" value="UniProtKB-UniRule"/>
</dbReference>
<dbReference type="GO" id="GO:0004478">
    <property type="term" value="F:methionine adenosyltransferase activity"/>
    <property type="evidence" value="ECO:0007669"/>
    <property type="project" value="UniProtKB-UniRule"/>
</dbReference>
<dbReference type="GO" id="GO:0006730">
    <property type="term" value="P:one-carbon metabolic process"/>
    <property type="evidence" value="ECO:0007669"/>
    <property type="project" value="UniProtKB-KW"/>
</dbReference>
<dbReference type="GO" id="GO:0006556">
    <property type="term" value="P:S-adenosylmethionine biosynthetic process"/>
    <property type="evidence" value="ECO:0007669"/>
    <property type="project" value="UniProtKB-UniRule"/>
</dbReference>
<dbReference type="CDD" id="cd18079">
    <property type="entry name" value="S-AdoMet_synt"/>
    <property type="match status" value="1"/>
</dbReference>
<dbReference type="FunFam" id="3.30.300.10:FF:000003">
    <property type="entry name" value="S-adenosylmethionine synthase"/>
    <property type="match status" value="1"/>
</dbReference>
<dbReference type="FunFam" id="3.30.300.10:FF:000004">
    <property type="entry name" value="S-adenosylmethionine synthase"/>
    <property type="match status" value="1"/>
</dbReference>
<dbReference type="Gene3D" id="3.30.300.10">
    <property type="match status" value="3"/>
</dbReference>
<dbReference type="HAMAP" id="MF_00086">
    <property type="entry name" value="S_AdoMet_synth1"/>
    <property type="match status" value="1"/>
</dbReference>
<dbReference type="InterPro" id="IPR022631">
    <property type="entry name" value="ADOMET_SYNTHASE_CS"/>
</dbReference>
<dbReference type="InterPro" id="IPR022630">
    <property type="entry name" value="S-AdoMet_synt_C"/>
</dbReference>
<dbReference type="InterPro" id="IPR022629">
    <property type="entry name" value="S-AdoMet_synt_central"/>
</dbReference>
<dbReference type="InterPro" id="IPR022628">
    <property type="entry name" value="S-AdoMet_synt_N"/>
</dbReference>
<dbReference type="InterPro" id="IPR002133">
    <property type="entry name" value="S-AdoMet_synthetase"/>
</dbReference>
<dbReference type="InterPro" id="IPR022636">
    <property type="entry name" value="S-AdoMet_synthetase_sfam"/>
</dbReference>
<dbReference type="NCBIfam" id="TIGR01034">
    <property type="entry name" value="metK"/>
    <property type="match status" value="1"/>
</dbReference>
<dbReference type="PANTHER" id="PTHR11964">
    <property type="entry name" value="S-ADENOSYLMETHIONINE SYNTHETASE"/>
    <property type="match status" value="1"/>
</dbReference>
<dbReference type="Pfam" id="PF02773">
    <property type="entry name" value="S-AdoMet_synt_C"/>
    <property type="match status" value="1"/>
</dbReference>
<dbReference type="Pfam" id="PF02772">
    <property type="entry name" value="S-AdoMet_synt_M"/>
    <property type="match status" value="1"/>
</dbReference>
<dbReference type="Pfam" id="PF00438">
    <property type="entry name" value="S-AdoMet_synt_N"/>
    <property type="match status" value="1"/>
</dbReference>
<dbReference type="PIRSF" id="PIRSF000497">
    <property type="entry name" value="MAT"/>
    <property type="match status" value="1"/>
</dbReference>
<dbReference type="SUPFAM" id="SSF55973">
    <property type="entry name" value="S-adenosylmethionine synthetase"/>
    <property type="match status" value="3"/>
</dbReference>
<dbReference type="PROSITE" id="PS00376">
    <property type="entry name" value="ADOMET_SYNTHASE_1"/>
    <property type="match status" value="1"/>
</dbReference>
<dbReference type="PROSITE" id="PS00377">
    <property type="entry name" value="ADOMET_SYNTHASE_2"/>
    <property type="match status" value="1"/>
</dbReference>
<evidence type="ECO:0000255" key="1">
    <source>
        <dbReference type="HAMAP-Rule" id="MF_00086"/>
    </source>
</evidence>
<gene>
    <name evidence="1" type="primary">metK</name>
    <name type="ordered locus">Bcenmc03_3099</name>
</gene>
<sequence>MANDYLFTSESVSEGHPDKVADQISDAILDAILEQDKYSRVAAETLCNTGLVVLAGEITTTANIDYIQIARDTIKRIGYDNTDYGIDYKGCAVLVAYDKQSPDIAQGVDRAHDDNLDQGAGDQGLMFGYACDETPELMPLPIYLSHRLVERQASLRRDGRLQWLRPDAKSQVTVRYVDGKPDSIDTVVLSTQHAPDIELPALREAVIEEIIKPTLPAELIKGDIKFLVNPTGRFVIGGPQGDCGLTGRKIIVDTYGGAAPHGGGAFSGKDPSKVDRSAAYAGRYVAKNIVAAGLASRALIQVSYAIGVAEPTSVMVNTFGTGRVSDAVITKLVREHFDLRPKGIIKMLDLLRPIYEKTAAYGHFGREEPEFSWEATDKALALAEAAGVEPTARVA</sequence>
<feature type="chain" id="PRO_1000093029" description="S-adenosylmethionine synthase">
    <location>
        <begin position="1"/>
        <end position="395"/>
    </location>
</feature>
<feature type="region of interest" description="Flexible loop" evidence="1">
    <location>
        <begin position="100"/>
        <end position="110"/>
    </location>
</feature>
<feature type="binding site" description="in other chain" evidence="1">
    <location>
        <position position="16"/>
    </location>
    <ligand>
        <name>ATP</name>
        <dbReference type="ChEBI" id="CHEBI:30616"/>
        <note>ligand shared between two neighboring subunits</note>
    </ligand>
</feature>
<feature type="binding site" evidence="1">
    <location>
        <position position="18"/>
    </location>
    <ligand>
        <name>Mg(2+)</name>
        <dbReference type="ChEBI" id="CHEBI:18420"/>
    </ligand>
</feature>
<feature type="binding site" evidence="1">
    <location>
        <position position="44"/>
    </location>
    <ligand>
        <name>K(+)</name>
        <dbReference type="ChEBI" id="CHEBI:29103"/>
    </ligand>
</feature>
<feature type="binding site" description="in other chain" evidence="1">
    <location>
        <position position="57"/>
    </location>
    <ligand>
        <name>L-methionine</name>
        <dbReference type="ChEBI" id="CHEBI:57844"/>
        <note>ligand shared between two neighboring subunits</note>
    </ligand>
</feature>
<feature type="binding site" description="in other chain" evidence="1">
    <location>
        <position position="100"/>
    </location>
    <ligand>
        <name>L-methionine</name>
        <dbReference type="ChEBI" id="CHEBI:57844"/>
        <note>ligand shared between two neighboring subunits</note>
    </ligand>
</feature>
<feature type="binding site" description="in other chain" evidence="1">
    <location>
        <begin position="167"/>
        <end position="169"/>
    </location>
    <ligand>
        <name>ATP</name>
        <dbReference type="ChEBI" id="CHEBI:30616"/>
        <note>ligand shared between two neighboring subunits</note>
    </ligand>
</feature>
<feature type="binding site" description="in other chain" evidence="1">
    <location>
        <begin position="233"/>
        <end position="234"/>
    </location>
    <ligand>
        <name>ATP</name>
        <dbReference type="ChEBI" id="CHEBI:30616"/>
        <note>ligand shared between two neighboring subunits</note>
    </ligand>
</feature>
<feature type="binding site" evidence="1">
    <location>
        <position position="242"/>
    </location>
    <ligand>
        <name>ATP</name>
        <dbReference type="ChEBI" id="CHEBI:30616"/>
        <note>ligand shared between two neighboring subunits</note>
    </ligand>
</feature>
<feature type="binding site" evidence="1">
    <location>
        <position position="242"/>
    </location>
    <ligand>
        <name>L-methionine</name>
        <dbReference type="ChEBI" id="CHEBI:57844"/>
        <note>ligand shared between two neighboring subunits</note>
    </ligand>
</feature>
<feature type="binding site" description="in other chain" evidence="1">
    <location>
        <begin position="248"/>
        <end position="249"/>
    </location>
    <ligand>
        <name>ATP</name>
        <dbReference type="ChEBI" id="CHEBI:30616"/>
        <note>ligand shared between two neighboring subunits</note>
    </ligand>
</feature>
<feature type="binding site" evidence="1">
    <location>
        <position position="265"/>
    </location>
    <ligand>
        <name>ATP</name>
        <dbReference type="ChEBI" id="CHEBI:30616"/>
        <note>ligand shared between two neighboring subunits</note>
    </ligand>
</feature>
<feature type="binding site" evidence="1">
    <location>
        <position position="269"/>
    </location>
    <ligand>
        <name>ATP</name>
        <dbReference type="ChEBI" id="CHEBI:30616"/>
        <note>ligand shared between two neighboring subunits</note>
    </ligand>
</feature>
<feature type="binding site" description="in other chain" evidence="1">
    <location>
        <position position="273"/>
    </location>
    <ligand>
        <name>L-methionine</name>
        <dbReference type="ChEBI" id="CHEBI:57844"/>
        <note>ligand shared between two neighboring subunits</note>
    </ligand>
</feature>
<organism>
    <name type="scientific">Burkholderia orbicola (strain MC0-3)</name>
    <dbReference type="NCBI Taxonomy" id="406425"/>
    <lineage>
        <taxon>Bacteria</taxon>
        <taxon>Pseudomonadati</taxon>
        <taxon>Pseudomonadota</taxon>
        <taxon>Betaproteobacteria</taxon>
        <taxon>Burkholderiales</taxon>
        <taxon>Burkholderiaceae</taxon>
        <taxon>Burkholderia</taxon>
        <taxon>Burkholderia cepacia complex</taxon>
        <taxon>Burkholderia orbicola</taxon>
    </lineage>
</organism>